<sequence length="124" mass="14123">MSERALRGTRLVVTSYETDRGIDLAPRQAVEYACEKGHRFEMPFSVEAEIPPEWECKVCGAQALLVDGDGPEEKKAKPARTHWDMLMERRTREELEEVLEERLAVLRSGAMNIAVHPRDSRKSA</sequence>
<reference key="1">
    <citation type="journal article" date="2002" name="Nature">
        <title>Complete genome sequence of the model actinomycete Streptomyces coelicolor A3(2).</title>
        <authorList>
            <person name="Bentley S.D."/>
            <person name="Chater K.F."/>
            <person name="Cerdeno-Tarraga A.-M."/>
            <person name="Challis G.L."/>
            <person name="Thomson N.R."/>
            <person name="James K.D."/>
            <person name="Harris D.E."/>
            <person name="Quail M.A."/>
            <person name="Kieser H."/>
            <person name="Harper D."/>
            <person name="Bateman A."/>
            <person name="Brown S."/>
            <person name="Chandra G."/>
            <person name="Chen C.W."/>
            <person name="Collins M."/>
            <person name="Cronin A."/>
            <person name="Fraser A."/>
            <person name="Goble A."/>
            <person name="Hidalgo J."/>
            <person name="Hornsby T."/>
            <person name="Howarth S."/>
            <person name="Huang C.-H."/>
            <person name="Kieser T."/>
            <person name="Larke L."/>
            <person name="Murphy L.D."/>
            <person name="Oliver K."/>
            <person name="O'Neil S."/>
            <person name="Rabbinowitsch E."/>
            <person name="Rajandream M.A."/>
            <person name="Rutherford K.M."/>
            <person name="Rutter S."/>
            <person name="Seeger K."/>
            <person name="Saunders D."/>
            <person name="Sharp S."/>
            <person name="Squares R."/>
            <person name="Squares S."/>
            <person name="Taylor K."/>
            <person name="Warren T."/>
            <person name="Wietzorrek A."/>
            <person name="Woodward J.R."/>
            <person name="Barrell B.G."/>
            <person name="Parkhill J."/>
            <person name="Hopwood D.A."/>
        </authorList>
    </citation>
    <scope>NUCLEOTIDE SEQUENCE [LARGE SCALE GENOMIC DNA]</scope>
    <source>
        <strain>ATCC BAA-471 / A3(2) / M145</strain>
    </source>
</reference>
<reference key="2">
    <citation type="journal article" date="2001" name="Mol. Microbiol.">
        <title>Defining the disulphide stress response in Streptomyces coelicolor A3(2): identification of the sigmaR regulon.</title>
        <authorList>
            <person name="Paget M.S.B."/>
            <person name="Molle V."/>
            <person name="Cohen G."/>
            <person name="Aharonowitz Y."/>
            <person name="Buttner M.J."/>
        </authorList>
    </citation>
    <scope>PROTEIN SEQUENCE OF 2-25</scope>
    <scope>SUBUNIT</scope>
    <scope>INDUCTION</scope>
    <source>
        <strain>ATCC BAA-471 / A3(2) / M145</strain>
    </source>
</reference>
<reference key="3">
    <citation type="journal article" date="2006" name="Mol. Microbiol.">
        <title>The RNA polymerase-binding protein RbpA confers basal levels of rifampicin resistance on Streptomyces coelicolor.</title>
        <authorList>
            <person name="Newell K.V."/>
            <person name="Thomas D.P."/>
            <person name="Brekasis D."/>
            <person name="Paget M.S."/>
        </authorList>
    </citation>
    <scope>FUNCTION</scope>
    <scope>SUBUNIT</scope>
    <scope>INTERACTION WITH RNA POLYMERASE</scope>
    <scope>ANTIBIOTIC RESISTANCE</scope>
    <scope>DISRUPTION PHENOTYPE</scope>
    <source>
        <strain>ATCC BAA-471 / A3(2) / M145</strain>
    </source>
</reference>
<reference key="4">
    <citation type="journal article" date="2013" name="Nucleic Acids Res.">
        <title>The actinobacterial transcription factor RbpA binds to the principal sigma subunit of RNA polymerase.</title>
        <authorList>
            <person name="Tabib-Salazar A."/>
            <person name="Liu B."/>
            <person name="Doughty P."/>
            <person name="Lewis R.A."/>
            <person name="Ghosh S."/>
            <person name="Parsy M.L."/>
            <person name="Simpson P.J."/>
            <person name="O'Dwyer K."/>
            <person name="Matthews S.J."/>
            <person name="Paget M.S."/>
        </authorList>
    </citation>
    <scope>STRUCTURE BY NMR OF 28-75</scope>
    <scope>FUNCTION</scope>
    <scope>SUBUNIT</scope>
    <scope>INTERACTION WITH HRDB (SIGA)</scope>
    <scope>COFACTOR</scope>
    <scope>DISRUPTION PHENOTYPE</scope>
    <scope>MUTAGENESIS OF CYS-34; HIS-38; CYS-56; CYS-59; HIS-82; GLU-88; 89-ARG-ARG-90; ARG-89; ARG-90 AND HIS-116</scope>
    <source>
        <strain>ATCC BAA-471 / A3(2) / M145</strain>
    </source>
</reference>
<organism>
    <name type="scientific">Streptomyces coelicolor (strain ATCC BAA-471 / A3(2) / M145)</name>
    <dbReference type="NCBI Taxonomy" id="100226"/>
    <lineage>
        <taxon>Bacteria</taxon>
        <taxon>Bacillati</taxon>
        <taxon>Actinomycetota</taxon>
        <taxon>Actinomycetes</taxon>
        <taxon>Kitasatosporales</taxon>
        <taxon>Streptomycetaceae</taxon>
        <taxon>Streptomyces</taxon>
        <taxon>Streptomyces albidoflavus group</taxon>
    </lineage>
</organism>
<name>RBPA_STRCO</name>
<accession>Q9RKY0</accession>
<gene>
    <name evidence="1" type="primary">rbpA</name>
    <name type="ordered locus">SCO1421</name>
</gene>
<protein>
    <recommendedName>
        <fullName evidence="1">RNA polymerase-binding protein RbpA</fullName>
    </recommendedName>
</protein>
<keyword id="KW-0002">3D-structure</keyword>
<keyword id="KW-0046">Antibiotic resistance</keyword>
<keyword id="KW-0903">Direct protein sequencing</keyword>
<keyword id="KW-0479">Metal-binding</keyword>
<keyword id="KW-1185">Reference proteome</keyword>
<keyword id="KW-0804">Transcription</keyword>
<keyword id="KW-0805">Transcription regulation</keyword>
<keyword id="KW-0862">Zinc</keyword>
<proteinExistence type="evidence at protein level"/>
<evidence type="ECO:0000255" key="1">
    <source>
        <dbReference type="HAMAP-Rule" id="MF_01483"/>
    </source>
</evidence>
<evidence type="ECO:0000269" key="2">
    <source>
    </source>
</evidence>
<evidence type="ECO:0000269" key="3">
    <source>
    </source>
</evidence>
<evidence type="ECO:0000269" key="4">
    <source>
    </source>
</evidence>
<evidence type="ECO:0000305" key="5"/>
<evidence type="ECO:0007829" key="6">
    <source>
        <dbReference type="PDB" id="2M6O"/>
    </source>
</evidence>
<evidence type="ECO:0007829" key="7">
    <source>
        <dbReference type="PDB" id="8HVR"/>
    </source>
</evidence>
<dbReference type="EMBL" id="AL939108">
    <property type="protein sequence ID" value="CAB61670.1"/>
    <property type="molecule type" value="Genomic_DNA"/>
</dbReference>
<dbReference type="RefSeq" id="NP_625703.1">
    <property type="nucleotide sequence ID" value="NC_003888.3"/>
</dbReference>
<dbReference type="RefSeq" id="WP_003977404.1">
    <property type="nucleotide sequence ID" value="NZ_VNID01000029.1"/>
</dbReference>
<dbReference type="PDB" id="2M6O">
    <property type="method" value="NMR"/>
    <property type="chains" value="A=28-75"/>
</dbReference>
<dbReference type="PDB" id="8HVR">
    <property type="method" value="EM"/>
    <property type="resolution" value="3.35 A"/>
    <property type="chains" value="G=1-124"/>
</dbReference>
<dbReference type="PDB" id="8JKE">
    <property type="method" value="EM"/>
    <property type="resolution" value="3.67 A"/>
    <property type="chains" value="G=1-124"/>
</dbReference>
<dbReference type="PDBsum" id="2M6O"/>
<dbReference type="PDBsum" id="8HVR"/>
<dbReference type="PDBsum" id="8JKE"/>
<dbReference type="BMRB" id="Q9RKY0"/>
<dbReference type="EMDB" id="EMD-36370"/>
<dbReference type="SMR" id="Q9RKY0"/>
<dbReference type="FunCoup" id="Q9RKY0">
    <property type="interactions" value="5"/>
</dbReference>
<dbReference type="STRING" id="100226.gene:17759007"/>
<dbReference type="PaxDb" id="100226-SCO1421"/>
<dbReference type="KEGG" id="sco:SCO1421"/>
<dbReference type="PATRIC" id="fig|100226.15.peg.1431"/>
<dbReference type="eggNOG" id="ENOG5032SI2">
    <property type="taxonomic scope" value="Bacteria"/>
</dbReference>
<dbReference type="HOGENOM" id="CLU_134276_0_0_11"/>
<dbReference type="InParanoid" id="Q9RKY0"/>
<dbReference type="OrthoDB" id="3618415at2"/>
<dbReference type="PhylomeDB" id="Q9RKY0"/>
<dbReference type="EvolutionaryTrace" id="Q9RKY0"/>
<dbReference type="PRO" id="PR:Q9RKY0"/>
<dbReference type="Proteomes" id="UP000001973">
    <property type="component" value="Chromosome"/>
</dbReference>
<dbReference type="GO" id="GO:0001000">
    <property type="term" value="F:bacterial-type RNA polymerase core enzyme binding"/>
    <property type="evidence" value="ECO:0007669"/>
    <property type="project" value="UniProtKB-UniRule"/>
</dbReference>
<dbReference type="GO" id="GO:0001108">
    <property type="term" value="F:bacterial-type RNA polymerase holo enzyme binding"/>
    <property type="evidence" value="ECO:0000314"/>
    <property type="project" value="UniProtKB"/>
</dbReference>
<dbReference type="GO" id="GO:0008270">
    <property type="term" value="F:zinc ion binding"/>
    <property type="evidence" value="ECO:0000315"/>
    <property type="project" value="UniProtKB"/>
</dbReference>
<dbReference type="GO" id="GO:0045893">
    <property type="term" value="P:positive regulation of DNA-templated transcription"/>
    <property type="evidence" value="ECO:0000314"/>
    <property type="project" value="UniProtKB"/>
</dbReference>
<dbReference type="GO" id="GO:0046677">
    <property type="term" value="P:response to antibiotic"/>
    <property type="evidence" value="ECO:0007669"/>
    <property type="project" value="UniProtKB-KW"/>
</dbReference>
<dbReference type="FunFam" id="2.20.28.270:FF:000001">
    <property type="entry name" value="RNA polymerase-binding protein RbpA"/>
    <property type="match status" value="1"/>
</dbReference>
<dbReference type="Gene3D" id="2.20.28.270">
    <property type="entry name" value="RNA polymerase-binding protein A"/>
    <property type="match status" value="1"/>
</dbReference>
<dbReference type="HAMAP" id="MF_01483">
    <property type="entry name" value="RbpA"/>
    <property type="match status" value="1"/>
</dbReference>
<dbReference type="InterPro" id="IPR038638">
    <property type="entry name" value="RbpA_sf"/>
</dbReference>
<dbReference type="InterPro" id="IPR025182">
    <property type="entry name" value="RNApol-bd_RbpA"/>
</dbReference>
<dbReference type="Pfam" id="PF13397">
    <property type="entry name" value="RbpA"/>
    <property type="match status" value="1"/>
</dbReference>
<feature type="initiator methionine" description="Removed" evidence="2">
    <location>
        <position position="1"/>
    </location>
</feature>
<feature type="chain" id="PRO_0000423657" description="RNA polymerase-binding protein RbpA">
    <location>
        <begin position="2"/>
        <end position="124"/>
    </location>
</feature>
<feature type="region of interest" description="Sufficient for interaction with HrdB (SigA)">
    <location>
        <begin position="73"/>
        <end position="124"/>
    </location>
</feature>
<feature type="binding site" evidence="5">
    <location>
        <position position="34"/>
    </location>
    <ligand>
        <name>Zn(2+)</name>
        <dbReference type="ChEBI" id="CHEBI:29105"/>
    </ligand>
</feature>
<feature type="binding site" evidence="1">
    <location>
        <position position="38"/>
    </location>
    <ligand>
        <name>Zn(2+)</name>
        <dbReference type="ChEBI" id="CHEBI:29105"/>
    </ligand>
</feature>
<feature type="binding site" evidence="5">
    <location>
        <position position="56"/>
    </location>
    <ligand>
        <name>Zn(2+)</name>
        <dbReference type="ChEBI" id="CHEBI:29105"/>
    </ligand>
</feature>
<feature type="binding site" evidence="5">
    <location>
        <position position="59"/>
    </location>
    <ligand>
        <name>Zn(2+)</name>
        <dbReference type="ChEBI" id="CHEBI:29105"/>
    </ligand>
</feature>
<feature type="mutagenesis site" description="Colonies remain small." evidence="4">
    <original>C</original>
    <variation>A</variation>
    <location>
        <position position="34"/>
    </location>
</feature>
<feature type="mutagenesis site" description="Restores wild-type size colonies." evidence="4">
    <original>H</original>
    <variation>A</variation>
    <location>
        <position position="38"/>
    </location>
</feature>
<feature type="mutagenesis site" description="Colonies remain small." evidence="4">
    <original>C</original>
    <variation>A</variation>
    <location>
        <position position="56"/>
    </location>
</feature>
<feature type="mutagenesis site" description="Colonies remain small." evidence="4">
    <original>C</original>
    <variation>A</variation>
    <location>
        <position position="59"/>
    </location>
</feature>
<feature type="mutagenesis site" description="Restores wild-type size colonies." evidence="4">
    <original>H</original>
    <variation>A</variation>
    <location>
        <position position="82"/>
    </location>
</feature>
<feature type="mutagenesis site" description="Loss of binding to HrdB (SigA), colonies remain small, does not stimulate transcription.">
    <original>ER</original>
    <variation>AA</variation>
    <location>
        <begin position="88"/>
        <end position="89"/>
    </location>
</feature>
<feature type="mutagenesis site" description="Increased binding to HrdB (SigA), restores wild-type size colonies." evidence="4">
    <original>E</original>
    <variation>A</variation>
    <location>
        <position position="88"/>
    </location>
</feature>
<feature type="mutagenesis site" description="25% binding to HrdB (SigA), nearly wild-type size colonies." evidence="4">
    <original>R</original>
    <variation>A</variation>
    <location>
        <position position="89"/>
    </location>
</feature>
<feature type="mutagenesis site" description="50% binding to HrdB (SigA), nearly wild-type size colonies." evidence="4">
    <original>R</original>
    <variation>A</variation>
    <location>
        <position position="90"/>
    </location>
</feature>
<feature type="mutagenesis site" description="Restores wild-type size colonies." evidence="4">
    <original>H</original>
    <variation>A</variation>
    <location>
        <position position="116"/>
    </location>
</feature>
<feature type="strand" evidence="7">
    <location>
        <begin position="27"/>
        <end position="34"/>
    </location>
</feature>
<feature type="strand" evidence="7">
    <location>
        <begin position="39"/>
        <end position="48"/>
    </location>
</feature>
<feature type="strand" evidence="6">
    <location>
        <begin position="52"/>
        <end position="55"/>
    </location>
</feature>
<feature type="turn" evidence="7">
    <location>
        <begin position="57"/>
        <end position="59"/>
    </location>
</feature>
<feature type="strand" evidence="7">
    <location>
        <begin position="62"/>
        <end position="64"/>
    </location>
</feature>
<feature type="strand" evidence="7">
    <location>
        <begin position="66"/>
        <end position="68"/>
    </location>
</feature>
<feature type="strand" evidence="6">
    <location>
        <begin position="69"/>
        <end position="71"/>
    </location>
</feature>
<feature type="strand" evidence="7">
    <location>
        <begin position="72"/>
        <end position="75"/>
    </location>
</feature>
<feature type="helix" evidence="7">
    <location>
        <begin position="82"/>
        <end position="89"/>
    </location>
</feature>
<feature type="helix" evidence="7">
    <location>
        <begin position="92"/>
        <end position="109"/>
    </location>
</feature>
<comment type="function">
    <text evidence="1 3 4">Binds to RNA polymerase (RNAP), stimulating transcription from principal, but not alternative sigma factor promoters. Stimulates transcription from several principal sigma factor HrdB (SigA)-dependent promoters but not from a SigR-dependent promoter. Stimulation occurs in the presence of the transcription initiation inhibitor rifampicin (Rif).</text>
</comment>
<comment type="cofactor">
    <cofactor evidence="1 4">
        <name>Zn(2+)</name>
        <dbReference type="ChEBI" id="CHEBI:29105"/>
    </cofactor>
    <text evidence="1 4">Bind 1 Zn(2+) per subunit.</text>
</comment>
<comment type="subunit">
    <text evidence="2 3 4 5">Homodimer (Probable). Forms a complex with the RNAP, and a complex with RNAP plus principal sigma factor HrdB associated with promoter. Binds to free principal sigma factors HrdB and HrdA, probably via the sigma-2 domain, but not to 6 other sigma factors tested.</text>
</comment>
<comment type="induction">
    <text evidence="2">Constitutively expressed partially under control of SigR; both SigR-dependent and independent induction are further induced by the thiol-oxidant diamide (disulfide stress). Induced by Rif.</text>
</comment>
<comment type="disruption phenotype">
    <text evidence="3 4">Grows slowly, colonies are smaller. Not more diamide sensitive than wild-type, sporulation normal, 15-fold more sensitive to Rif.</text>
</comment>
<comment type="similarity">
    <text evidence="1">Belongs to the RNA polymerase-binding protein RbpA family.</text>
</comment>